<keyword id="KW-0002">3D-structure</keyword>
<keyword id="KW-0067">ATP-binding</keyword>
<keyword id="KW-0963">Cytoplasm</keyword>
<keyword id="KW-0347">Helicase</keyword>
<keyword id="KW-0378">Hydrolase</keyword>
<keyword id="KW-0472">Membrane</keyword>
<keyword id="KW-0509">mRNA transport</keyword>
<keyword id="KW-0906">Nuclear pore complex</keyword>
<keyword id="KW-0547">Nucleotide-binding</keyword>
<keyword id="KW-0539">Nucleus</keyword>
<keyword id="KW-0597">Phosphoprotein</keyword>
<keyword id="KW-0653">Protein transport</keyword>
<keyword id="KW-1185">Reference proteome</keyword>
<keyword id="KW-0694">RNA-binding</keyword>
<keyword id="KW-0811">Translocation</keyword>
<keyword id="KW-0813">Transport</keyword>
<reference key="1">
    <citation type="submission" date="1995-05" db="EMBL/GenBank/DDBJ databases">
        <authorList>
            <person name="Chang T.-H."/>
        </authorList>
    </citation>
    <scope>NUCLEOTIDE SEQUENCE [GENOMIC DNA]</scope>
</reference>
<reference key="2">
    <citation type="journal article" date="1997" name="Nature">
        <title>The nucleotide sequence of Saccharomyces cerevisiae chromosome XV.</title>
        <authorList>
            <person name="Dujon B."/>
            <person name="Albermann K."/>
            <person name="Aldea M."/>
            <person name="Alexandraki D."/>
            <person name="Ansorge W."/>
            <person name="Arino J."/>
            <person name="Benes V."/>
            <person name="Bohn C."/>
            <person name="Bolotin-Fukuhara M."/>
            <person name="Bordonne R."/>
            <person name="Boyer J."/>
            <person name="Camasses A."/>
            <person name="Casamayor A."/>
            <person name="Casas C."/>
            <person name="Cheret G."/>
            <person name="Cziepluch C."/>
            <person name="Daignan-Fornier B."/>
            <person name="Dang V.-D."/>
            <person name="de Haan M."/>
            <person name="Delius H."/>
            <person name="Durand P."/>
            <person name="Fairhead C."/>
            <person name="Feldmann H."/>
            <person name="Gaillon L."/>
            <person name="Galisson F."/>
            <person name="Gamo F.-J."/>
            <person name="Gancedo C."/>
            <person name="Goffeau A."/>
            <person name="Goulding S.E."/>
            <person name="Grivell L.A."/>
            <person name="Habbig B."/>
            <person name="Hand N.J."/>
            <person name="Hani J."/>
            <person name="Hattenhorst U."/>
            <person name="Hebling U."/>
            <person name="Hernando Y."/>
            <person name="Herrero E."/>
            <person name="Heumann K."/>
            <person name="Hiesel R."/>
            <person name="Hilger F."/>
            <person name="Hofmann B."/>
            <person name="Hollenberg C.P."/>
            <person name="Hughes B."/>
            <person name="Jauniaux J.-C."/>
            <person name="Kalogeropoulos A."/>
            <person name="Katsoulou C."/>
            <person name="Kordes E."/>
            <person name="Lafuente M.J."/>
            <person name="Landt O."/>
            <person name="Louis E.J."/>
            <person name="Maarse A.C."/>
            <person name="Madania A."/>
            <person name="Mannhaupt G."/>
            <person name="Marck C."/>
            <person name="Martin R.P."/>
            <person name="Mewes H.-W."/>
            <person name="Michaux G."/>
            <person name="Paces V."/>
            <person name="Parle-McDermott A.G."/>
            <person name="Pearson B.M."/>
            <person name="Perrin A."/>
            <person name="Pettersson B."/>
            <person name="Poch O."/>
            <person name="Pohl T.M."/>
            <person name="Poirey R."/>
            <person name="Portetelle D."/>
            <person name="Pujol A."/>
            <person name="Purnelle B."/>
            <person name="Ramezani Rad M."/>
            <person name="Rechmann S."/>
            <person name="Schwager C."/>
            <person name="Schweizer M."/>
            <person name="Sor F."/>
            <person name="Sterky F."/>
            <person name="Tarassov I.A."/>
            <person name="Teodoru C."/>
            <person name="Tettelin H."/>
            <person name="Thierry A."/>
            <person name="Tobiasch E."/>
            <person name="Tzermia M."/>
            <person name="Uhlen M."/>
            <person name="Unseld M."/>
            <person name="Valens M."/>
            <person name="Vandenbol M."/>
            <person name="Vetter I."/>
            <person name="Vlcek C."/>
            <person name="Voet M."/>
            <person name="Volckaert G."/>
            <person name="Voss H."/>
            <person name="Wambutt R."/>
            <person name="Wedler H."/>
            <person name="Wiemann S."/>
            <person name="Winsor B."/>
            <person name="Wolfe K.H."/>
            <person name="Zollner A."/>
            <person name="Zumstein E."/>
            <person name="Kleine K."/>
        </authorList>
    </citation>
    <scope>NUCLEOTIDE SEQUENCE [LARGE SCALE GENOMIC DNA]</scope>
    <source>
        <strain>ATCC 204508 / S288c</strain>
    </source>
</reference>
<reference key="3">
    <citation type="journal article" date="2014" name="G3 (Bethesda)">
        <title>The reference genome sequence of Saccharomyces cerevisiae: Then and now.</title>
        <authorList>
            <person name="Engel S.R."/>
            <person name="Dietrich F.S."/>
            <person name="Fisk D.G."/>
            <person name="Binkley G."/>
            <person name="Balakrishnan R."/>
            <person name="Costanzo M.C."/>
            <person name="Dwight S.S."/>
            <person name="Hitz B.C."/>
            <person name="Karra K."/>
            <person name="Nash R.S."/>
            <person name="Weng S."/>
            <person name="Wong E.D."/>
            <person name="Lloyd P."/>
            <person name="Skrzypek M.S."/>
            <person name="Miyasato S.R."/>
            <person name="Simison M."/>
            <person name="Cherry J.M."/>
        </authorList>
    </citation>
    <scope>GENOME REANNOTATION</scope>
    <source>
        <strain>ATCC 204508 / S288c</strain>
    </source>
</reference>
<reference key="4">
    <citation type="journal article" date="1990" name="Proc. Natl. Acad. Sci. U.S.A.">
        <title>Identification of five putative yeast RNA helicase genes.</title>
        <authorList>
            <person name="Chang T.-H."/>
            <person name="Arenas J."/>
            <person name="Abelson J."/>
        </authorList>
    </citation>
    <scope>NUCLEOTIDE SEQUENCE [GENOMIC DNA] OF 237-425</scope>
</reference>
<reference key="5">
    <citation type="journal article" date="1998" name="EMBO J.">
        <title>Dbp5p, a cytosolic RNA helicase, is required for poly(A)+ RNA export.</title>
        <authorList>
            <person name="Tseng S.S.-I."/>
            <person name="Weaver P.L."/>
            <person name="Liu Y."/>
            <person name="Hitomi M."/>
            <person name="Tartakoff A.M."/>
            <person name="Chang T.-H."/>
        </authorList>
    </citation>
    <scope>FUNCTION</scope>
    <scope>SUBCELLULAR LOCATION</scope>
    <scope>MUTAGENESIS OF SER-171; LEU-220; PHE-236; VAL-345 AND THR-466</scope>
</reference>
<reference key="6">
    <citation type="journal article" date="1998" name="EMBO J.">
        <title>Dbp5p/Rat8p is a yeast nuclear pore-associated DEAD-box protein essential for RNA export.</title>
        <authorList>
            <person name="Snay-Hodge C.A."/>
            <person name="Colot H.V."/>
            <person name="Goldstein A.L."/>
            <person name="Cole C.N."/>
        </authorList>
    </citation>
    <scope>FUNCTION</scope>
    <scope>SUBCELLULAR LOCATION</scope>
    <scope>MUTAGENESIS OF PRO-170; LEU-267 AND ILE-385</scope>
</reference>
<reference key="7">
    <citation type="journal article" date="1999" name="EMBO J.">
        <title>Dbp5, a DEAD-box protein required for mRNA export, is recruited to the cytoplasmic fibrils of nuclear pore complex via a conserved interaction with CAN/Nup159p.</title>
        <authorList>
            <person name="Schmitt C."/>
            <person name="von Kobbe C."/>
            <person name="Bachi A."/>
            <person name="Pante N."/>
            <person name="Rodrigues J.P."/>
            <person name="Boscheron C."/>
            <person name="Rigaut G."/>
            <person name="Wilm M."/>
            <person name="Seraphin B."/>
            <person name="Carmo-Fonseca M."/>
            <person name="Izaurralde E."/>
        </authorList>
    </citation>
    <scope>FUNCTION</scope>
    <scope>INTERACTION WITH NUP159</scope>
    <scope>ASSOCIATION WITH THE NUCLEAR PORE COMPLEX</scope>
    <scope>SUBCELLULAR LOCATION</scope>
</reference>
<reference key="8">
    <citation type="journal article" date="1999" name="EMBO J.">
        <title>The RNA export factor Gle1p is located on the cytoplasmic fibrils of the NPC and physically interacts with the FG-nucleoporin Rip1p, the DEAD-box protein Rat8p/Dbp5p and a new protein Ymr255p.</title>
        <authorList>
            <person name="Strahm Y."/>
            <person name="Fahrenkrog B."/>
            <person name="Zenklusen D."/>
            <person name="Rychner E."/>
            <person name="Kantor J."/>
            <person name="Rosbach M."/>
            <person name="Stutz F."/>
        </authorList>
    </citation>
    <scope>FUNCTION</scope>
    <scope>INTERACTION WITH GLE1</scope>
    <scope>SUBCELLULAR LOCATION</scope>
    <scope>ASSOCIATION WITH THE NUCLEAR PORE COMPLEX</scope>
</reference>
<reference key="9">
    <citation type="journal article" date="1999" name="EMBO J.">
        <title>Rat8p/Dbp5p is a shuttling transport factor that interacts with Rat7p/Nup159p and Gle1p and suppresses the mRNA export defect of xpo1-1 cells.</title>
        <authorList>
            <person name="Hodge C.A."/>
            <person name="Colot H.V."/>
            <person name="Stafford P."/>
            <person name="Cole C.N."/>
        </authorList>
    </citation>
    <scope>FUNCTION</scope>
    <scope>INTERACTION WITH NUP159 AND GLE1</scope>
    <scope>ASSOCIATION WITH THE NUCLEAR PORE COMPLEX</scope>
    <scope>SUBCELLULAR LOCATION</scope>
</reference>
<reference key="10">
    <citation type="journal article" date="2001" name="RNA">
        <title>Defects in the mRNA export factors Rat7p, Gle1p, Mex67p, and Rat8p cause hyperadenylation during 3'-end formation of nascent transcripts.</title>
        <authorList>
            <person name="Hilleren P."/>
            <person name="Parker R."/>
        </authorList>
    </citation>
    <scope>FUNCTION</scope>
</reference>
<reference key="11">
    <citation type="journal article" date="2002" name="Mol. Cell. Biol.">
        <title>Coupling of termination, 3' processing, and mRNA export.</title>
        <authorList>
            <person name="Hammell C.M."/>
            <person name="Gross S."/>
            <person name="Zenklusen D."/>
            <person name="Heath C.V."/>
            <person name="Stutz F."/>
            <person name="Moore C."/>
            <person name="Cole C.N."/>
        </authorList>
    </citation>
    <scope>FUNCTION</scope>
</reference>
<reference key="12">
    <citation type="journal article" date="2003" name="Mol. Biol. Cell">
        <title>An early function during transcription for the yeast mRNA export factor Dbp5p/Rat8p suggested by its genetic and physical interactions with transcription factor IIH components.</title>
        <authorList>
            <person name="Estruch F."/>
            <person name="Cole C.N."/>
        </authorList>
    </citation>
    <scope>FUNCTION</scope>
    <scope>INTERACTION WITH TFB1; TFB2 AND RAD3</scope>
</reference>
<reference key="13">
    <citation type="journal article" date="2003" name="Nature">
        <title>Global analysis of protein localization in budding yeast.</title>
        <authorList>
            <person name="Huh W.-K."/>
            <person name="Falvo J.V."/>
            <person name="Gerke L.C."/>
            <person name="Carroll A.S."/>
            <person name="Howson R.W."/>
            <person name="Weissman J.S."/>
            <person name="O'Shea E.K."/>
        </authorList>
    </citation>
    <scope>SUBCELLULAR LOCATION [LARGE SCALE ANALYSIS]</scope>
</reference>
<reference key="14">
    <citation type="journal article" date="2003" name="Nature">
        <title>Global analysis of protein expression in yeast.</title>
        <authorList>
            <person name="Ghaemmaghami S."/>
            <person name="Huh W.-K."/>
            <person name="Bower K."/>
            <person name="Howson R.W."/>
            <person name="Belle A."/>
            <person name="Dephoure N."/>
            <person name="O'Shea E.K."/>
            <person name="Weissman J.S."/>
        </authorList>
    </citation>
    <scope>LEVEL OF PROTEIN EXPRESSION [LARGE SCALE ANALYSIS]</scope>
</reference>
<reference key="15">
    <citation type="journal article" date="2004" name="J. Cell Sci.">
        <title>Stress response in yeast mRNA export factor: reversible changes in Rat8p localization are caused by ethanol stress but not heat shock.</title>
        <authorList>
            <person name="Takemura R."/>
            <person name="Inoue Y."/>
            <person name="Izawa S."/>
        </authorList>
    </citation>
    <scope>FUNCTION</scope>
    <scope>SUBCELLULAR LOCATION</scope>
</reference>
<reference key="16">
    <citation type="journal article" date="2004" name="Mol. Cell">
        <title>The N-terminal domain of Nup159 forms a beta-propeller that functions in mRNA export by tethering the helicase Dbp5 to the nuclear pore.</title>
        <authorList>
            <person name="Weirich C.S."/>
            <person name="Erzberger J.P."/>
            <person name="Berger J.M."/>
            <person name="Weis K."/>
        </authorList>
    </citation>
    <scope>FUNCTION</scope>
    <scope>INTERACTION WITH NUP159</scope>
    <scope>SUBCELLULAR LOCATION</scope>
</reference>
<reference key="17">
    <citation type="journal article" date="2005" name="J. Biol. Chem.">
        <title>Physical and genetic interactions link the yeast protein Zds1p with mRNA nuclear export.</title>
        <authorList>
            <person name="Estruch F."/>
            <person name="Hodge C.A."/>
            <person name="Rodriguez-Navarro S."/>
            <person name="Cole C.N."/>
        </authorList>
    </citation>
    <scope>FUNCTION</scope>
    <scope>INTERACTION WITH GFD1 AND ZDS1</scope>
</reference>
<reference key="18">
    <citation type="journal article" date="2007" name="J. Proteome Res.">
        <title>Large-scale phosphorylation analysis of alpha-factor-arrested Saccharomyces cerevisiae.</title>
        <authorList>
            <person name="Li X."/>
            <person name="Gerber S.A."/>
            <person name="Rudner A.D."/>
            <person name="Beausoleil S.A."/>
            <person name="Haas W."/>
            <person name="Villen J."/>
            <person name="Elias J.E."/>
            <person name="Gygi S.P."/>
        </authorList>
    </citation>
    <scope>PHOSPHORYLATION [LARGE SCALE ANALYSIS] AT SER-86</scope>
    <scope>IDENTIFICATION BY MASS SPECTROMETRY [LARGE SCALE ANALYSIS]</scope>
    <source>
        <strain>ADR376</strain>
    </source>
</reference>
<reference key="19">
    <citation type="journal article" date="2008" name="Mol. Cell. Proteomics">
        <title>A multidimensional chromatography technology for in-depth phosphoproteome analysis.</title>
        <authorList>
            <person name="Albuquerque C.P."/>
            <person name="Smolka M.B."/>
            <person name="Payne S.H."/>
            <person name="Bafna V."/>
            <person name="Eng J."/>
            <person name="Zhou H."/>
        </authorList>
    </citation>
    <scope>PHOSPHORYLATION [LARGE SCALE ANALYSIS] AT SER-86 AND SER-162</scope>
    <scope>IDENTIFICATION BY MASS SPECTROMETRY [LARGE SCALE ANALYSIS]</scope>
</reference>
<reference key="20">
    <citation type="journal article" date="2009" name="Science">
        <title>Global analysis of Cdk1 substrate phosphorylation sites provides insights into evolution.</title>
        <authorList>
            <person name="Holt L.J."/>
            <person name="Tuch B.B."/>
            <person name="Villen J."/>
            <person name="Johnson A.D."/>
            <person name="Gygi S.P."/>
            <person name="Morgan D.O."/>
        </authorList>
    </citation>
    <scope>PHOSPHORYLATION [LARGE SCALE ANALYSIS] AT SER-93</scope>
    <scope>IDENTIFICATION BY MASS SPECTROMETRY [LARGE SCALE ANALYSIS]</scope>
</reference>
<evidence type="ECO:0000255" key="1">
    <source>
        <dbReference type="PROSITE-ProRule" id="PRU00541"/>
    </source>
</evidence>
<evidence type="ECO:0000255" key="2">
    <source>
        <dbReference type="PROSITE-ProRule" id="PRU00542"/>
    </source>
</evidence>
<evidence type="ECO:0000256" key="3">
    <source>
        <dbReference type="SAM" id="MobiDB-lite"/>
    </source>
</evidence>
<evidence type="ECO:0000269" key="4">
    <source>
    </source>
</evidence>
<evidence type="ECO:0000269" key="5">
    <source>
    </source>
</evidence>
<evidence type="ECO:0000269" key="6">
    <source>
    </source>
</evidence>
<evidence type="ECO:0000269" key="7">
    <source>
    </source>
</evidence>
<evidence type="ECO:0000269" key="8">
    <source>
    </source>
</evidence>
<evidence type="ECO:0000269" key="9">
    <source>
    </source>
</evidence>
<evidence type="ECO:0000269" key="10">
    <source>
    </source>
</evidence>
<evidence type="ECO:0000269" key="11">
    <source>
    </source>
</evidence>
<evidence type="ECO:0000269" key="12">
    <source>
    </source>
</evidence>
<evidence type="ECO:0000269" key="13">
    <source>
    </source>
</evidence>
<evidence type="ECO:0000269" key="14">
    <source>
    </source>
</evidence>
<evidence type="ECO:0000269" key="15">
    <source>
    </source>
</evidence>
<evidence type="ECO:0000305" key="16"/>
<evidence type="ECO:0007744" key="17">
    <source>
    </source>
</evidence>
<evidence type="ECO:0007744" key="18">
    <source>
    </source>
</evidence>
<evidence type="ECO:0007744" key="19">
    <source>
    </source>
</evidence>
<evidence type="ECO:0007829" key="20">
    <source>
        <dbReference type="PDB" id="2KBE"/>
    </source>
</evidence>
<evidence type="ECO:0007829" key="21">
    <source>
        <dbReference type="PDB" id="2KBF"/>
    </source>
</evidence>
<evidence type="ECO:0007829" key="22">
    <source>
        <dbReference type="PDB" id="3GFP"/>
    </source>
</evidence>
<evidence type="ECO:0007829" key="23">
    <source>
        <dbReference type="PDB" id="3PEU"/>
    </source>
</evidence>
<evidence type="ECO:0007829" key="24">
    <source>
        <dbReference type="PDB" id="3PEV"/>
    </source>
</evidence>
<evidence type="ECO:0007829" key="25">
    <source>
        <dbReference type="PDB" id="3PEY"/>
    </source>
</evidence>
<evidence type="ECO:0007829" key="26">
    <source>
        <dbReference type="PDB" id="3RRM"/>
    </source>
</evidence>
<evidence type="ECO:0007829" key="27">
    <source>
        <dbReference type="PDB" id="5ELX"/>
    </source>
</evidence>
<dbReference type="EC" id="3.6.4.13"/>
<dbReference type="EMBL" id="U28135">
    <property type="protein sequence ID" value="AAB01679.1"/>
    <property type="molecule type" value="Genomic_DNA"/>
</dbReference>
<dbReference type="EMBL" id="Z74954">
    <property type="protein sequence ID" value="CAA99237.1"/>
    <property type="molecule type" value="Genomic_DNA"/>
</dbReference>
<dbReference type="EMBL" id="Z74955">
    <property type="protein sequence ID" value="CAA99239.1"/>
    <property type="molecule type" value="Genomic_DNA"/>
</dbReference>
<dbReference type="EMBL" id="BK006948">
    <property type="protein sequence ID" value="DAA10828.1"/>
    <property type="molecule type" value="Genomic_DNA"/>
</dbReference>
<dbReference type="PIR" id="S66920">
    <property type="entry name" value="S66920"/>
</dbReference>
<dbReference type="RefSeq" id="NP_014689.1">
    <property type="nucleotide sequence ID" value="NM_001183465.1"/>
</dbReference>
<dbReference type="PDB" id="2KBE">
    <property type="method" value="NMR"/>
    <property type="chains" value="A=71-296"/>
</dbReference>
<dbReference type="PDB" id="2KBF">
    <property type="method" value="NMR"/>
    <property type="chains" value="A=296-482"/>
</dbReference>
<dbReference type="PDB" id="3GFP">
    <property type="method" value="X-ray"/>
    <property type="resolution" value="1.80 A"/>
    <property type="chains" value="A=296-482"/>
</dbReference>
<dbReference type="PDB" id="3PEU">
    <property type="method" value="X-ray"/>
    <property type="resolution" value="2.60 A"/>
    <property type="chains" value="A=297-482"/>
</dbReference>
<dbReference type="PDB" id="3PEV">
    <property type="method" value="X-ray"/>
    <property type="resolution" value="2.50 A"/>
    <property type="chains" value="A=297-482"/>
</dbReference>
<dbReference type="PDB" id="3PEW">
    <property type="method" value="X-ray"/>
    <property type="resolution" value="1.50 A"/>
    <property type="chains" value="A=91-482"/>
</dbReference>
<dbReference type="PDB" id="3PEY">
    <property type="method" value="X-ray"/>
    <property type="resolution" value="1.40 A"/>
    <property type="chains" value="A=91-482"/>
</dbReference>
<dbReference type="PDB" id="3RRM">
    <property type="method" value="X-ray"/>
    <property type="resolution" value="2.88 A"/>
    <property type="chains" value="A=91-482"/>
</dbReference>
<dbReference type="PDB" id="3RRN">
    <property type="method" value="X-ray"/>
    <property type="resolution" value="4.00 A"/>
    <property type="chains" value="A=91-482"/>
</dbReference>
<dbReference type="PDB" id="5ELX">
    <property type="method" value="X-ray"/>
    <property type="resolution" value="1.81 A"/>
    <property type="chains" value="A=91-481"/>
</dbReference>
<dbReference type="PDBsum" id="2KBE"/>
<dbReference type="PDBsum" id="2KBF"/>
<dbReference type="PDBsum" id="3GFP"/>
<dbReference type="PDBsum" id="3PEU"/>
<dbReference type="PDBsum" id="3PEV"/>
<dbReference type="PDBsum" id="3PEW"/>
<dbReference type="PDBsum" id="3PEY"/>
<dbReference type="PDBsum" id="3RRM"/>
<dbReference type="PDBsum" id="3RRN"/>
<dbReference type="PDBsum" id="5ELX"/>
<dbReference type="SMR" id="P20449"/>
<dbReference type="BioGRID" id="34447">
    <property type="interactions" value="508"/>
</dbReference>
<dbReference type="DIP" id="DIP-2352N"/>
<dbReference type="FunCoup" id="P20449">
    <property type="interactions" value="924"/>
</dbReference>
<dbReference type="IntAct" id="P20449">
    <property type="interactions" value="21"/>
</dbReference>
<dbReference type="MINT" id="P20449"/>
<dbReference type="STRING" id="4932.YOR046C"/>
<dbReference type="iPTMnet" id="P20449"/>
<dbReference type="PaxDb" id="4932-YOR046C"/>
<dbReference type="PeptideAtlas" id="P20449"/>
<dbReference type="EnsemblFungi" id="YOR046C_mRNA">
    <property type="protein sequence ID" value="YOR046C"/>
    <property type="gene ID" value="YOR046C"/>
</dbReference>
<dbReference type="GeneID" id="854211"/>
<dbReference type="KEGG" id="sce:YOR046C"/>
<dbReference type="AGR" id="SGD:S000005572"/>
<dbReference type="SGD" id="S000005572">
    <property type="gene designation" value="DBP5"/>
</dbReference>
<dbReference type="VEuPathDB" id="FungiDB:YOR046C"/>
<dbReference type="eggNOG" id="KOG0332">
    <property type="taxonomic scope" value="Eukaryota"/>
</dbReference>
<dbReference type="GeneTree" id="ENSGT00940000173368"/>
<dbReference type="HOGENOM" id="CLU_003041_1_0_1"/>
<dbReference type="InParanoid" id="P20449"/>
<dbReference type="OMA" id="IAAETRW"/>
<dbReference type="OrthoDB" id="10265785at2759"/>
<dbReference type="BioCyc" id="YEAST:G3O-33590-MONOMER"/>
<dbReference type="BioGRID-ORCS" id="854211">
    <property type="hits" value="1 hit in 10 CRISPR screens"/>
</dbReference>
<dbReference type="EvolutionaryTrace" id="P20449"/>
<dbReference type="PRO" id="PR:P20449"/>
<dbReference type="Proteomes" id="UP000002311">
    <property type="component" value="Chromosome XV"/>
</dbReference>
<dbReference type="RNAct" id="P20449">
    <property type="molecule type" value="protein"/>
</dbReference>
<dbReference type="GO" id="GO:0005934">
    <property type="term" value="C:cellular bud tip"/>
    <property type="evidence" value="ECO:0000314"/>
    <property type="project" value="SGD"/>
</dbReference>
<dbReference type="GO" id="GO:0005737">
    <property type="term" value="C:cytoplasm"/>
    <property type="evidence" value="ECO:0000314"/>
    <property type="project" value="SGD"/>
</dbReference>
<dbReference type="GO" id="GO:0010494">
    <property type="term" value="C:cytoplasmic stress granule"/>
    <property type="evidence" value="ECO:0000314"/>
    <property type="project" value="SGD"/>
</dbReference>
<dbReference type="GO" id="GO:0031965">
    <property type="term" value="C:nuclear membrane"/>
    <property type="evidence" value="ECO:0007669"/>
    <property type="project" value="UniProtKB-SubCell"/>
</dbReference>
<dbReference type="GO" id="GO:0044614">
    <property type="term" value="C:nuclear pore cytoplasmic filaments"/>
    <property type="evidence" value="ECO:0000314"/>
    <property type="project" value="SGD"/>
</dbReference>
<dbReference type="GO" id="GO:0005634">
    <property type="term" value="C:nucleus"/>
    <property type="evidence" value="ECO:0000314"/>
    <property type="project" value="SGD"/>
</dbReference>
<dbReference type="GO" id="GO:0005524">
    <property type="term" value="F:ATP binding"/>
    <property type="evidence" value="ECO:0007669"/>
    <property type="project" value="UniProtKB-KW"/>
</dbReference>
<dbReference type="GO" id="GO:0016887">
    <property type="term" value="F:ATP hydrolysis activity"/>
    <property type="evidence" value="ECO:0007669"/>
    <property type="project" value="RHEA"/>
</dbReference>
<dbReference type="GO" id="GO:0008186">
    <property type="term" value="F:ATP-dependent activity, acting on RNA"/>
    <property type="evidence" value="ECO:0000314"/>
    <property type="project" value="SGD"/>
</dbReference>
<dbReference type="GO" id="GO:0003729">
    <property type="term" value="F:mRNA binding"/>
    <property type="evidence" value="ECO:0000318"/>
    <property type="project" value="GO_Central"/>
</dbReference>
<dbReference type="GO" id="GO:0003724">
    <property type="term" value="F:RNA helicase activity"/>
    <property type="evidence" value="ECO:0000314"/>
    <property type="project" value="SGD"/>
</dbReference>
<dbReference type="GO" id="GO:0006406">
    <property type="term" value="P:mRNA export from nucleus"/>
    <property type="evidence" value="ECO:0000315"/>
    <property type="project" value="SGD"/>
</dbReference>
<dbReference type="GO" id="GO:0016973">
    <property type="term" value="P:poly(A)+ mRNA export from nucleus"/>
    <property type="evidence" value="ECO:0000315"/>
    <property type="project" value="SGD"/>
</dbReference>
<dbReference type="GO" id="GO:0015031">
    <property type="term" value="P:protein transport"/>
    <property type="evidence" value="ECO:0007669"/>
    <property type="project" value="UniProtKB-KW"/>
</dbReference>
<dbReference type="GO" id="GO:0006415">
    <property type="term" value="P:translational termination"/>
    <property type="evidence" value="ECO:0000316"/>
    <property type="project" value="SGD"/>
</dbReference>
<dbReference type="GO" id="GO:0006409">
    <property type="term" value="P:tRNA export from nucleus"/>
    <property type="evidence" value="ECO:0000314"/>
    <property type="project" value="SGD"/>
</dbReference>
<dbReference type="CDD" id="cd17963">
    <property type="entry name" value="DEADc_DDX19_DDX25"/>
    <property type="match status" value="1"/>
</dbReference>
<dbReference type="CDD" id="cd18787">
    <property type="entry name" value="SF2_C_DEAD"/>
    <property type="match status" value="1"/>
</dbReference>
<dbReference type="FunFam" id="3.40.50.300:FF:000849">
    <property type="entry name" value="ATP-dependent RNA helicase DBP5"/>
    <property type="match status" value="1"/>
</dbReference>
<dbReference type="FunFam" id="3.40.50.300:FF:000318">
    <property type="entry name" value="ATP-dependent RNA helicase DDX19B"/>
    <property type="match status" value="1"/>
</dbReference>
<dbReference type="Gene3D" id="3.40.50.300">
    <property type="entry name" value="P-loop containing nucleotide triphosphate hydrolases"/>
    <property type="match status" value="2"/>
</dbReference>
<dbReference type="InterPro" id="IPR011545">
    <property type="entry name" value="DEAD/DEAH_box_helicase_dom"/>
</dbReference>
<dbReference type="InterPro" id="IPR014001">
    <property type="entry name" value="Helicase_ATP-bd"/>
</dbReference>
<dbReference type="InterPro" id="IPR001650">
    <property type="entry name" value="Helicase_C-like"/>
</dbReference>
<dbReference type="InterPro" id="IPR027417">
    <property type="entry name" value="P-loop_NTPase"/>
</dbReference>
<dbReference type="InterPro" id="IPR000629">
    <property type="entry name" value="RNA-helicase_DEAD-box_CS"/>
</dbReference>
<dbReference type="InterPro" id="IPR014014">
    <property type="entry name" value="RNA_helicase_DEAD_Q_motif"/>
</dbReference>
<dbReference type="PANTHER" id="PTHR47958">
    <property type="entry name" value="ATP-DEPENDENT RNA HELICASE DBP3"/>
    <property type="match status" value="1"/>
</dbReference>
<dbReference type="Pfam" id="PF00270">
    <property type="entry name" value="DEAD"/>
    <property type="match status" value="1"/>
</dbReference>
<dbReference type="Pfam" id="PF00271">
    <property type="entry name" value="Helicase_C"/>
    <property type="match status" value="1"/>
</dbReference>
<dbReference type="SMART" id="SM00487">
    <property type="entry name" value="DEXDc"/>
    <property type="match status" value="1"/>
</dbReference>
<dbReference type="SMART" id="SM00490">
    <property type="entry name" value="HELICc"/>
    <property type="match status" value="1"/>
</dbReference>
<dbReference type="SUPFAM" id="SSF52540">
    <property type="entry name" value="P-loop containing nucleoside triphosphate hydrolases"/>
    <property type="match status" value="1"/>
</dbReference>
<dbReference type="PROSITE" id="PS00039">
    <property type="entry name" value="DEAD_ATP_HELICASE"/>
    <property type="match status" value="1"/>
</dbReference>
<dbReference type="PROSITE" id="PS51192">
    <property type="entry name" value="HELICASE_ATP_BIND_1"/>
    <property type="match status" value="1"/>
</dbReference>
<dbReference type="PROSITE" id="PS51194">
    <property type="entry name" value="HELICASE_CTER"/>
    <property type="match status" value="1"/>
</dbReference>
<dbReference type="PROSITE" id="PS51195">
    <property type="entry name" value="Q_MOTIF"/>
    <property type="match status" value="1"/>
</dbReference>
<proteinExistence type="evidence at protein level"/>
<feature type="chain" id="PRO_0000055019" description="ATP-dependent RNA helicase DBP5">
    <location>
        <begin position="1"/>
        <end position="482"/>
    </location>
</feature>
<feature type="domain" description="Helicase ATP-binding" evidence="1">
    <location>
        <begin position="125"/>
        <end position="292"/>
    </location>
</feature>
<feature type="domain" description="Helicase C-terminal" evidence="2">
    <location>
        <begin position="303"/>
        <end position="480"/>
    </location>
</feature>
<feature type="region of interest" description="Disordered" evidence="3">
    <location>
        <begin position="1"/>
        <end position="62"/>
    </location>
</feature>
<feature type="short sequence motif" description="Q motif">
    <location>
        <begin position="92"/>
        <end position="120"/>
    </location>
</feature>
<feature type="short sequence motif" description="DEAD box">
    <location>
        <begin position="239"/>
        <end position="242"/>
    </location>
</feature>
<feature type="compositionally biased region" description="Basic and acidic residues" evidence="3">
    <location>
        <begin position="17"/>
        <end position="62"/>
    </location>
</feature>
<feature type="binding site" evidence="1">
    <location>
        <begin position="138"/>
        <end position="145"/>
    </location>
    <ligand>
        <name>ATP</name>
        <dbReference type="ChEBI" id="CHEBI:30616"/>
    </ligand>
</feature>
<feature type="modified residue" description="Phosphoserine" evidence="17 18">
    <location>
        <position position="86"/>
    </location>
</feature>
<feature type="modified residue" description="Phosphoserine" evidence="19">
    <location>
        <position position="93"/>
    </location>
</feature>
<feature type="modified residue" description="Phosphoserine" evidence="18">
    <location>
        <position position="162"/>
    </location>
</feature>
<feature type="mutagenesis site" description="In RAT8-7; accumulates poly(A)+ RNA in the nucleus at 16 degrees Celsius." evidence="15">
    <original>P</original>
    <variation>H</variation>
    <location>
        <position position="170"/>
    </location>
</feature>
<feature type="mutagenesis site" description="In DBP5-2; accumulates poly(A)+ RNA in the nucleus at 37 degrees Celsius; when associated with L-236 and F-245." evidence="14">
    <original>S</original>
    <variation>P</variation>
    <location>
        <position position="171"/>
    </location>
</feature>
<feature type="mutagenesis site" description="In DBP5-1; accumulates poly(A)+ RNA in the nucleus at 37 degrees Celsius; when associated with S-466." evidence="14">
    <original>L</original>
    <variation>P</variation>
    <location>
        <position position="220"/>
    </location>
</feature>
<feature type="mutagenesis site" description="In DBP5-2; accumulates poly(A)+ RNA in the nucleus at 37 degrees Celsius; when associated with P-171 and F-245." evidence="14">
    <original>F</original>
    <variation>L</variation>
    <location>
        <position position="236"/>
    </location>
</feature>
<feature type="mutagenesis site" description="In RAT8-2; accumulates poly(A)+ RNA in the nucleus at 16 and 37 degrees Celsius." evidence="15">
    <original>L</original>
    <variation>P</variation>
    <location>
        <position position="267"/>
    </location>
</feature>
<feature type="mutagenesis site" description="In DBP5-2; accumulates poly(A)+ RNA in the nucleus at 37 degrees Celsius; when associated with P-171 and L-236." evidence="14">
    <original>V</original>
    <variation>F</variation>
    <location>
        <position position="345"/>
    </location>
</feature>
<feature type="mutagenesis site" description="In RAT8-3; accumulates poly(A)+ RNA in the nucleus at 16 and 37 degrees Celsius." evidence="15">
    <original>I</original>
    <variation>D</variation>
    <location>
        <position position="385"/>
    </location>
</feature>
<feature type="mutagenesis site" description="In DBP5-1; accumulates poly(A)+ RNA in the nucleus at 37 degrees Celsius; when associated with P-220." evidence="14">
    <original>T</original>
    <variation>S</variation>
    <location>
        <position position="466"/>
    </location>
</feature>
<feature type="strand" evidence="20">
    <location>
        <begin position="78"/>
        <end position="80"/>
    </location>
</feature>
<feature type="helix" evidence="20">
    <location>
        <begin position="83"/>
        <end position="85"/>
    </location>
</feature>
<feature type="helix" evidence="20">
    <location>
        <begin position="87"/>
        <end position="90"/>
    </location>
</feature>
<feature type="helix" evidence="20">
    <location>
        <begin position="94"/>
        <end position="97"/>
    </location>
</feature>
<feature type="helix" evidence="25">
    <location>
        <begin position="101"/>
        <end position="109"/>
    </location>
</feature>
<feature type="strand" evidence="20">
    <location>
        <begin position="110"/>
        <end position="113"/>
    </location>
</feature>
<feature type="helix" evidence="25">
    <location>
        <begin position="117"/>
        <end position="127"/>
    </location>
</feature>
<feature type="strand" evidence="26">
    <location>
        <begin position="128"/>
        <end position="130"/>
    </location>
</feature>
<feature type="strand" evidence="25">
    <location>
        <begin position="134"/>
        <end position="137"/>
    </location>
</feature>
<feature type="helix" evidence="25">
    <location>
        <begin position="144"/>
        <end position="155"/>
    </location>
</feature>
<feature type="strand" evidence="25">
    <location>
        <begin position="165"/>
        <end position="168"/>
    </location>
</feature>
<feature type="helix" evidence="25">
    <location>
        <begin position="172"/>
        <end position="185"/>
    </location>
</feature>
<feature type="turn" evidence="25">
    <location>
        <begin position="186"/>
        <end position="188"/>
    </location>
</feature>
<feature type="strand" evidence="25">
    <location>
        <begin position="193"/>
        <end position="197"/>
    </location>
</feature>
<feature type="strand" evidence="27">
    <location>
        <begin position="203"/>
        <end position="205"/>
    </location>
</feature>
<feature type="strand" evidence="25">
    <location>
        <begin position="210"/>
        <end position="214"/>
    </location>
</feature>
<feature type="helix" evidence="25">
    <location>
        <begin position="216"/>
        <end position="224"/>
    </location>
</feature>
<feature type="strand" evidence="25">
    <location>
        <begin position="235"/>
        <end position="239"/>
    </location>
</feature>
<feature type="helix" evidence="25">
    <location>
        <begin position="241"/>
        <end position="246"/>
    </location>
</feature>
<feature type="helix" evidence="25">
    <location>
        <begin position="250"/>
        <end position="259"/>
    </location>
</feature>
<feature type="turn" evidence="20">
    <location>
        <begin position="261"/>
        <end position="264"/>
    </location>
</feature>
<feature type="strand" evidence="25">
    <location>
        <begin position="266"/>
        <end position="272"/>
    </location>
</feature>
<feature type="helix" evidence="25">
    <location>
        <begin position="276"/>
        <end position="285"/>
    </location>
</feature>
<feature type="strand" evidence="25">
    <location>
        <begin position="290"/>
        <end position="292"/>
    </location>
</feature>
<feature type="helix" evidence="25">
    <location>
        <begin position="296"/>
        <end position="298"/>
    </location>
</feature>
<feature type="turn" evidence="22">
    <location>
        <begin position="301"/>
        <end position="303"/>
    </location>
</feature>
<feature type="strand" evidence="25">
    <location>
        <begin position="304"/>
        <end position="310"/>
    </location>
</feature>
<feature type="helix" evidence="25">
    <location>
        <begin position="314"/>
        <end position="325"/>
    </location>
</feature>
<feature type="turn" evidence="25">
    <location>
        <begin position="326"/>
        <end position="329"/>
    </location>
</feature>
<feature type="strand" evidence="25">
    <location>
        <begin position="330"/>
        <end position="336"/>
    </location>
</feature>
<feature type="helix" evidence="25">
    <location>
        <begin position="340"/>
        <end position="352"/>
    </location>
</feature>
<feature type="strand" evidence="25">
    <location>
        <begin position="358"/>
        <end position="360"/>
    </location>
</feature>
<feature type="strand" evidence="26">
    <location>
        <begin position="362"/>
        <end position="364"/>
    </location>
</feature>
<feature type="helix" evidence="25">
    <location>
        <begin position="366"/>
        <end position="377"/>
    </location>
</feature>
<feature type="turn" evidence="21">
    <location>
        <begin position="378"/>
        <end position="380"/>
    </location>
</feature>
<feature type="strand" evidence="25">
    <location>
        <begin position="383"/>
        <end position="386"/>
    </location>
</feature>
<feature type="helix" evidence="25">
    <location>
        <begin position="388"/>
        <end position="390"/>
    </location>
</feature>
<feature type="strand" evidence="25">
    <location>
        <begin position="391"/>
        <end position="393"/>
    </location>
</feature>
<feature type="strand" evidence="25">
    <location>
        <begin position="399"/>
        <end position="406"/>
    </location>
</feature>
<feature type="strand" evidence="25">
    <location>
        <begin position="413"/>
        <end position="415"/>
    </location>
</feature>
<feature type="helix" evidence="25">
    <location>
        <begin position="417"/>
        <end position="424"/>
    </location>
</feature>
<feature type="helix" evidence="24">
    <location>
        <begin position="425"/>
        <end position="427"/>
    </location>
</feature>
<feature type="strand" evidence="25">
    <location>
        <begin position="434"/>
        <end position="440"/>
    </location>
</feature>
<feature type="helix" evidence="25">
    <location>
        <begin position="443"/>
        <end position="455"/>
    </location>
</feature>
<feature type="turn" evidence="23">
    <location>
        <begin position="456"/>
        <end position="458"/>
    </location>
</feature>
<feature type="strand" evidence="22">
    <location>
        <begin position="462"/>
        <end position="465"/>
    </location>
</feature>
<feature type="helix" evidence="25">
    <location>
        <begin position="469"/>
        <end position="480"/>
    </location>
</feature>
<organism>
    <name type="scientific">Saccharomyces cerevisiae (strain ATCC 204508 / S288c)</name>
    <name type="common">Baker's yeast</name>
    <dbReference type="NCBI Taxonomy" id="559292"/>
    <lineage>
        <taxon>Eukaryota</taxon>
        <taxon>Fungi</taxon>
        <taxon>Dikarya</taxon>
        <taxon>Ascomycota</taxon>
        <taxon>Saccharomycotina</taxon>
        <taxon>Saccharomycetes</taxon>
        <taxon>Saccharomycetales</taxon>
        <taxon>Saccharomycetaceae</taxon>
        <taxon>Saccharomyces</taxon>
    </lineage>
</organism>
<name>DBP5_YEAST</name>
<gene>
    <name type="primary">DBP5</name>
    <name type="synonym">RAT8</name>
    <name type="ordered locus">YOR046C</name>
</gene>
<comment type="function">
    <text evidence="4 5 6 7 8 9 11 12 13 14 15">ATP-dependent RNA helicase associated with the nuclear pore complex and essential for mRNA export from the nucleus. May participate in a terminal step of mRNA export through the removal of proteins that accompany mRNA through the nucleopore complex. Contributes to the blocking of bulk poly(A)+ mRNA export in ethanol-stressed cells. May also be involved in early transcription.</text>
</comment>
<comment type="catalytic activity">
    <reaction>
        <text>ATP + H2O = ADP + phosphate + H(+)</text>
        <dbReference type="Rhea" id="RHEA:13065"/>
        <dbReference type="ChEBI" id="CHEBI:15377"/>
        <dbReference type="ChEBI" id="CHEBI:15378"/>
        <dbReference type="ChEBI" id="CHEBI:30616"/>
        <dbReference type="ChEBI" id="CHEBI:43474"/>
        <dbReference type="ChEBI" id="CHEBI:456216"/>
        <dbReference type="EC" id="3.6.4.13"/>
    </reaction>
</comment>
<comment type="subunit">
    <text evidence="4 5 6 9 12 13">Associates with the nuclear pore complex. Interacts with NUP159, GLE1, GFD1 and ZDS1. The interaction with NUP159 is necessary for the association to the nuclear pore complex. Also interacts with the TFIIH complex subunits TFB1, TFB2 and RAD3.</text>
</comment>
<comment type="interaction">
    <interactant intactId="EBI-5617">
        <id>P20449</id>
    </interactant>
    <interactant intactId="EBI-27549">
        <id>Q04839</id>
        <label>GFD1</label>
    </interactant>
    <organismsDiffer>false</organismsDiffer>
    <experiments>2</experiments>
</comment>
<comment type="interaction">
    <interactant intactId="EBI-5617">
        <id>P20449</id>
    </interactant>
    <interactant intactId="EBI-7635">
        <id>Q12315</id>
        <label>GLE1</label>
    </interactant>
    <organismsDiffer>false</organismsDiffer>
    <experiments>8</experiments>
</comment>
<comment type="interaction">
    <interactant intactId="EBI-5617">
        <id>P20449</id>
    </interactant>
    <interactant intactId="EBI-29626">
        <id>P50111</id>
        <label>ZDS1</label>
    </interactant>
    <organismsDiffer>false</organismsDiffer>
    <experiments>3</experiments>
</comment>
<comment type="subcellular location">
    <subcellularLocation>
        <location>Cytoplasm</location>
    </subcellularLocation>
    <subcellularLocation>
        <location>Nucleus</location>
        <location>Nuclear pore complex</location>
    </subcellularLocation>
    <subcellularLocation>
        <location>Nucleus membrane</location>
        <topology>Peripheral membrane protein</topology>
        <orientation>Cytoplasmic side</orientation>
    </subcellularLocation>
    <text>Nuclear pore complex cytoplasmic fibrils. Accumulates in the nucleus rapidly and reversibly in response to ethanol stress.</text>
</comment>
<comment type="domain">
    <text>The Q motif is unique to and characteristic of the DEAD box family of RNA helicases and controls ATP binding and hydrolysis.</text>
</comment>
<comment type="miscellaneous">
    <text evidence="10">Present with 14900 molecules/cell in log phase SD medium.</text>
</comment>
<comment type="similarity">
    <text evidence="16">Belongs to the DEAD box helicase family. DDX19/DBP5 subfamily.</text>
</comment>
<sequence>MSDTKRDPADLLASLKIDNEKEDTSEVSTKETVKSQPEKTADSIKPAEKLVPKVEEKKTKQEDSNLISSEYEVKVKLADIQADPNSPLYSAKSFDELGLAPELLKGIYAMKFQKPSKIQERALPLLLHNPPRNMIAQSQSGTGKTAAFSLTMLTRVNPEDASPQAICLAPSRELARQTLEVVQEMGKFTKITSQLIVPDSFEKNKQINAQVIVGTPGTVLDLMRRKLMQLQKIKIFVLDEADNMLDQQGLGDQCIRVKRFLPKDTQLVLFSATFADAVRQYAKKIVPNANTLELQTNEVNVDAIKQLYMDCKNEADKFDVLTELYGLMTIGSSIIFVATKKTANVLYGKLKSEGHEVSILHGDLQTQERDRLIDDFREGRSKVLITTNVLARGIDIPTVSMVVNYDLPTLANGQADPATYIHRIGRTGRFGRKGVAISFVHDKNSFNILSAIQKYFGDIEMTRVPTDDWDEVEKIVKKVLKD</sequence>
<accession>P20449</accession>
<accession>D6W2B2</accession>
<protein>
    <recommendedName>
        <fullName>ATP-dependent RNA helicase DBP5</fullName>
        <ecNumber>3.6.4.13</ecNumber>
    </recommendedName>
    <alternativeName>
        <fullName>DEAD box protein 5</fullName>
    </alternativeName>
    <alternativeName>
        <fullName>Helicase CA5/6</fullName>
    </alternativeName>
    <alternativeName>
        <fullName>Ribonucleic acid-trafficking protein 8</fullName>
    </alternativeName>
</protein>